<reference key="1">
    <citation type="journal article" date="2009" name="Proc. Natl. Acad. Sci. U.S.A.">
        <title>Biogeography of the Sulfolobus islandicus pan-genome.</title>
        <authorList>
            <person name="Reno M.L."/>
            <person name="Held N.L."/>
            <person name="Fields C.J."/>
            <person name="Burke P.V."/>
            <person name="Whitaker R.J."/>
        </authorList>
    </citation>
    <scope>NUCLEOTIDE SEQUENCE [LARGE SCALE GENOMIC DNA]</scope>
    <source>
        <strain>M.14.25 / Kamchatka #1</strain>
    </source>
</reference>
<proteinExistence type="inferred from homology"/>
<sequence>MTEEKIQSYRKKIYVIRQKLKAKKPRFLRYDSDKFFRLGRQEKWRRPYGRDNKTRLKVRGFPAIVSVGYRLPKEVRGFHPSGLRQVIVHNVNDLVKVQNQKDSVIVTIASSVGFKKRLEILNKARELGLKVSNEGVSA</sequence>
<dbReference type="EMBL" id="CP001400">
    <property type="protein sequence ID" value="ACP38190.1"/>
    <property type="molecule type" value="Genomic_DNA"/>
</dbReference>
<dbReference type="RefSeq" id="WP_012711435.1">
    <property type="nucleotide sequence ID" value="NC_012588.1"/>
</dbReference>
<dbReference type="SMR" id="C3MVJ5"/>
<dbReference type="KEGG" id="sia:M1425_1437"/>
<dbReference type="HOGENOM" id="CLU_071479_3_0_2"/>
<dbReference type="Proteomes" id="UP000001350">
    <property type="component" value="Chromosome"/>
</dbReference>
<dbReference type="GO" id="GO:0022625">
    <property type="term" value="C:cytosolic large ribosomal subunit"/>
    <property type="evidence" value="ECO:0007669"/>
    <property type="project" value="TreeGrafter"/>
</dbReference>
<dbReference type="GO" id="GO:0003735">
    <property type="term" value="F:structural constituent of ribosome"/>
    <property type="evidence" value="ECO:0007669"/>
    <property type="project" value="InterPro"/>
</dbReference>
<dbReference type="GO" id="GO:0006412">
    <property type="term" value="P:translation"/>
    <property type="evidence" value="ECO:0007669"/>
    <property type="project" value="UniProtKB-UniRule"/>
</dbReference>
<dbReference type="CDD" id="cd00513">
    <property type="entry name" value="Ribosomal_L32_L32e"/>
    <property type="match status" value="1"/>
</dbReference>
<dbReference type="HAMAP" id="MF_00810">
    <property type="entry name" value="Ribosomal_eL32"/>
    <property type="match status" value="1"/>
</dbReference>
<dbReference type="InterPro" id="IPR001515">
    <property type="entry name" value="Ribosomal_eL32"/>
</dbReference>
<dbReference type="InterPro" id="IPR023654">
    <property type="entry name" value="Ribosomal_eL32_arc"/>
</dbReference>
<dbReference type="InterPro" id="IPR018263">
    <property type="entry name" value="Ribosomal_eL32_CS"/>
</dbReference>
<dbReference type="InterPro" id="IPR036351">
    <property type="entry name" value="Ribosomal_eL32_sf"/>
</dbReference>
<dbReference type="NCBIfam" id="NF006332">
    <property type="entry name" value="PRK08562.1"/>
    <property type="match status" value="1"/>
</dbReference>
<dbReference type="PANTHER" id="PTHR23413">
    <property type="entry name" value="60S RIBOSOMAL PROTEIN L32 AND DNA-DIRECTED RNA POLYMERASE II, SUBUNIT N"/>
    <property type="match status" value="1"/>
</dbReference>
<dbReference type="PANTHER" id="PTHR23413:SF1">
    <property type="entry name" value="RIBOSOMAL PROTEIN L32"/>
    <property type="match status" value="1"/>
</dbReference>
<dbReference type="Pfam" id="PF01655">
    <property type="entry name" value="Ribosomal_L32e"/>
    <property type="match status" value="1"/>
</dbReference>
<dbReference type="SMART" id="SM01393">
    <property type="entry name" value="Ribosomal_L32e"/>
    <property type="match status" value="1"/>
</dbReference>
<dbReference type="SUPFAM" id="SSF52042">
    <property type="entry name" value="Ribosomal protein L32e"/>
    <property type="match status" value="1"/>
</dbReference>
<dbReference type="PROSITE" id="PS00580">
    <property type="entry name" value="RIBOSOMAL_L32E"/>
    <property type="match status" value="1"/>
</dbReference>
<feature type="chain" id="PRO_1000213013" description="Large ribosomal subunit protein eL32">
    <location>
        <begin position="1"/>
        <end position="138"/>
    </location>
</feature>
<gene>
    <name evidence="1" type="primary">rpl32e</name>
    <name type="ordered locus">M1425_1437</name>
</gene>
<protein>
    <recommendedName>
        <fullName evidence="1">Large ribosomal subunit protein eL32</fullName>
    </recommendedName>
    <alternativeName>
        <fullName evidence="2">50S ribosomal protein L32e</fullName>
    </alternativeName>
</protein>
<comment type="similarity">
    <text evidence="1">Belongs to the eukaryotic ribosomal protein eL32 family.</text>
</comment>
<keyword id="KW-0687">Ribonucleoprotein</keyword>
<keyword id="KW-0689">Ribosomal protein</keyword>
<organism>
    <name type="scientific">Saccharolobus islandicus (strain M.14.25 / Kamchatka #1)</name>
    <name type="common">Sulfolobus islandicus</name>
    <dbReference type="NCBI Taxonomy" id="427317"/>
    <lineage>
        <taxon>Archaea</taxon>
        <taxon>Thermoproteota</taxon>
        <taxon>Thermoprotei</taxon>
        <taxon>Sulfolobales</taxon>
        <taxon>Sulfolobaceae</taxon>
        <taxon>Saccharolobus</taxon>
    </lineage>
</organism>
<accession>C3MVJ5</accession>
<evidence type="ECO:0000255" key="1">
    <source>
        <dbReference type="HAMAP-Rule" id="MF_00810"/>
    </source>
</evidence>
<evidence type="ECO:0000305" key="2"/>
<name>RL32_SACI4</name>